<dbReference type="SMR" id="P55942"/>
<dbReference type="FunCoup" id="P55942">
    <property type="interactions" value="8"/>
</dbReference>
<dbReference type="PeptideAtlas" id="P55942"/>
<dbReference type="InParanoid" id="P55942"/>
<dbReference type="Proteomes" id="UP000009136">
    <property type="component" value="Unplaced"/>
</dbReference>
<dbReference type="GO" id="GO:0005737">
    <property type="term" value="C:cytoplasm"/>
    <property type="evidence" value="ECO:0000250"/>
    <property type="project" value="UniProtKB"/>
</dbReference>
<dbReference type="GO" id="GO:0005634">
    <property type="term" value="C:nucleus"/>
    <property type="evidence" value="ECO:0000250"/>
    <property type="project" value="UniProtKB"/>
</dbReference>
<dbReference type="GO" id="GO:0046872">
    <property type="term" value="F:metal ion binding"/>
    <property type="evidence" value="ECO:0000318"/>
    <property type="project" value="GO_Central"/>
</dbReference>
<dbReference type="GO" id="GO:0008270">
    <property type="term" value="F:zinc ion binding"/>
    <property type="evidence" value="ECO:0000250"/>
    <property type="project" value="UniProtKB"/>
</dbReference>
<dbReference type="GO" id="GO:0071276">
    <property type="term" value="P:cellular response to cadmium ion"/>
    <property type="evidence" value="ECO:0000318"/>
    <property type="project" value="GO_Central"/>
</dbReference>
<dbReference type="GO" id="GO:0071280">
    <property type="term" value="P:cellular response to copper ion"/>
    <property type="evidence" value="ECO:0000318"/>
    <property type="project" value="GO_Central"/>
</dbReference>
<dbReference type="GO" id="GO:0071294">
    <property type="term" value="P:cellular response to zinc ion"/>
    <property type="evidence" value="ECO:0000250"/>
    <property type="project" value="UniProtKB"/>
</dbReference>
<dbReference type="GO" id="GO:0010273">
    <property type="term" value="P:detoxification of copper ion"/>
    <property type="evidence" value="ECO:0000318"/>
    <property type="project" value="GO_Central"/>
</dbReference>
<dbReference type="GO" id="GO:0006882">
    <property type="term" value="P:intracellular zinc ion homeostasis"/>
    <property type="evidence" value="ECO:0000318"/>
    <property type="project" value="GO_Central"/>
</dbReference>
<dbReference type="GO" id="GO:0045926">
    <property type="term" value="P:negative regulation of growth"/>
    <property type="evidence" value="ECO:0000250"/>
    <property type="project" value="UniProtKB"/>
</dbReference>
<dbReference type="FunFam" id="4.10.10.10:FF:000001">
    <property type="entry name" value="Metallothionein"/>
    <property type="match status" value="1"/>
</dbReference>
<dbReference type="Gene3D" id="4.10.10.10">
    <property type="entry name" value="Metallothionein Isoform II"/>
    <property type="match status" value="1"/>
</dbReference>
<dbReference type="InterPro" id="IPR017854">
    <property type="entry name" value="Metalthion_dom_sf"/>
</dbReference>
<dbReference type="InterPro" id="IPR023587">
    <property type="entry name" value="Metalthion_dom_sf_vert"/>
</dbReference>
<dbReference type="InterPro" id="IPR000006">
    <property type="entry name" value="Metalthion_vert"/>
</dbReference>
<dbReference type="InterPro" id="IPR018064">
    <property type="entry name" value="Metalthion_vert_metal_BS"/>
</dbReference>
<dbReference type="PANTHER" id="PTHR23299">
    <property type="entry name" value="METALLOTHIONEIN"/>
    <property type="match status" value="1"/>
</dbReference>
<dbReference type="PANTHER" id="PTHR23299:SF38">
    <property type="entry name" value="METALLOTHIONEIN-2B"/>
    <property type="match status" value="1"/>
</dbReference>
<dbReference type="Pfam" id="PF00131">
    <property type="entry name" value="Metallothio"/>
    <property type="match status" value="1"/>
</dbReference>
<dbReference type="PRINTS" id="PR00860">
    <property type="entry name" value="MTVERTEBRATE"/>
</dbReference>
<dbReference type="SUPFAM" id="SSF57868">
    <property type="entry name" value="Metallothionein"/>
    <property type="match status" value="1"/>
</dbReference>
<dbReference type="PROSITE" id="PS00203">
    <property type="entry name" value="METALLOTHIONEIN_VRT"/>
    <property type="match status" value="1"/>
</dbReference>
<accession>P55942</accession>
<reference key="1">
    <citation type="journal article" date="1996" name="J. Neurochem.">
        <title>Amino acid composition, immunoreactivity, sequence analysis, and function of bovine hippocampal metallothionein isoforms.</title>
        <authorList>
            <person name="Ebadi M."/>
            <person name="Perini F."/>
            <person name="Mountjoy K."/>
            <person name="Garvey J.S."/>
        </authorList>
    </citation>
    <scope>PROTEIN SEQUENCE</scope>
    <source>
        <tissue>Hippocampus</tissue>
    </source>
</reference>
<protein>
    <recommendedName>
        <fullName>Metallothionein-I, hippocampal</fullName>
    </recommendedName>
    <alternativeName>
        <fullName>MT-1</fullName>
    </alternativeName>
</protein>
<organism>
    <name type="scientific">Bos taurus</name>
    <name type="common">Bovine</name>
    <dbReference type="NCBI Taxonomy" id="9913"/>
    <lineage>
        <taxon>Eukaryota</taxon>
        <taxon>Metazoa</taxon>
        <taxon>Chordata</taxon>
        <taxon>Craniata</taxon>
        <taxon>Vertebrata</taxon>
        <taxon>Euteleostomi</taxon>
        <taxon>Mammalia</taxon>
        <taxon>Eutheria</taxon>
        <taxon>Laurasiatheria</taxon>
        <taxon>Artiodactyla</taxon>
        <taxon>Ruminantia</taxon>
        <taxon>Pecora</taxon>
        <taxon>Bovidae</taxon>
        <taxon>Bovinae</taxon>
        <taxon>Bos</taxon>
    </lineage>
</organism>
<feature type="chain" id="PRO_0000197224" description="Metallothionein-I, hippocampal">
    <location>
        <begin position="1"/>
        <end position="61"/>
    </location>
</feature>
<feature type="region of interest" description="Beta">
    <location>
        <begin position="1"/>
        <end position="29"/>
    </location>
</feature>
<feature type="region of interest" description="Alpha">
    <location>
        <begin position="30"/>
        <end position="61"/>
    </location>
</feature>
<feature type="binding site" evidence="1">
    <location>
        <position position="5"/>
    </location>
    <ligand>
        <name>a divalent metal cation</name>
        <dbReference type="ChEBI" id="CHEBI:60240"/>
        <label>1</label>
        <note>in cluster B</note>
    </ligand>
</feature>
<feature type="binding site" evidence="1">
    <location>
        <position position="7"/>
    </location>
    <ligand>
        <name>a divalent metal cation</name>
        <dbReference type="ChEBI" id="CHEBI:60240"/>
        <label>1</label>
        <note>in cluster B</note>
    </ligand>
</feature>
<feature type="binding site" evidence="1">
    <location>
        <position position="7"/>
    </location>
    <ligand>
        <name>a divalent metal cation</name>
        <dbReference type="ChEBI" id="CHEBI:60240"/>
        <label>2</label>
        <note>in cluster B</note>
    </ligand>
</feature>
<feature type="binding site" evidence="1">
    <location>
        <position position="13"/>
    </location>
    <ligand>
        <name>a divalent metal cation</name>
        <dbReference type="ChEBI" id="CHEBI:60240"/>
        <label>2</label>
        <note>in cluster B</note>
    </ligand>
</feature>
<feature type="binding site" evidence="1">
    <location>
        <position position="15"/>
    </location>
    <ligand>
        <name>a divalent metal cation</name>
        <dbReference type="ChEBI" id="CHEBI:60240"/>
        <label>2</label>
        <note>in cluster B</note>
    </ligand>
</feature>
<feature type="binding site" evidence="1">
    <location>
        <position position="15"/>
    </location>
    <ligand>
        <name>a divalent metal cation</name>
        <dbReference type="ChEBI" id="CHEBI:60240"/>
        <label>3</label>
        <note>in cluster B</note>
    </ligand>
</feature>
<feature type="binding site" evidence="1">
    <location>
        <position position="19"/>
    </location>
    <ligand>
        <name>a divalent metal cation</name>
        <dbReference type="ChEBI" id="CHEBI:60240"/>
        <label>3</label>
        <note>in cluster B</note>
    </ligand>
</feature>
<feature type="binding site" evidence="1">
    <location>
        <position position="21"/>
    </location>
    <ligand>
        <name>a divalent metal cation</name>
        <dbReference type="ChEBI" id="CHEBI:60240"/>
        <label>1</label>
        <note>in cluster B</note>
    </ligand>
</feature>
<feature type="binding site" evidence="1">
    <location>
        <position position="24"/>
    </location>
    <ligand>
        <name>a divalent metal cation</name>
        <dbReference type="ChEBI" id="CHEBI:60240"/>
        <label>1</label>
        <note>in cluster B</note>
    </ligand>
</feature>
<feature type="binding site" evidence="1">
    <location>
        <position position="24"/>
    </location>
    <ligand>
        <name>a divalent metal cation</name>
        <dbReference type="ChEBI" id="CHEBI:60240"/>
        <label>3</label>
        <note>in cluster B</note>
    </ligand>
</feature>
<feature type="binding site" evidence="1">
    <location>
        <position position="26"/>
    </location>
    <ligand>
        <name>a divalent metal cation</name>
        <dbReference type="ChEBI" id="CHEBI:60240"/>
        <label>2</label>
        <note>in cluster B</note>
    </ligand>
</feature>
<feature type="binding site" evidence="1">
    <location>
        <position position="29"/>
    </location>
    <ligand>
        <name>a divalent metal cation</name>
        <dbReference type="ChEBI" id="CHEBI:60240"/>
        <label>3</label>
        <note>in cluster B</note>
    </ligand>
</feature>
<feature type="binding site" evidence="1">
    <location>
        <position position="33"/>
    </location>
    <ligand>
        <name>a divalent metal cation</name>
        <dbReference type="ChEBI" id="CHEBI:60240"/>
        <label>4</label>
        <note>in cluster A</note>
    </ligand>
</feature>
<feature type="binding site" evidence="1">
    <location>
        <position position="34"/>
    </location>
    <ligand>
        <name>a divalent metal cation</name>
        <dbReference type="ChEBI" id="CHEBI:60240"/>
        <label>4</label>
        <note>in cluster A</note>
    </ligand>
</feature>
<feature type="binding site" evidence="1">
    <location>
        <position position="34"/>
    </location>
    <ligand>
        <name>a divalent metal cation</name>
        <dbReference type="ChEBI" id="CHEBI:60240"/>
        <label>5</label>
        <note>in cluster A</note>
    </ligand>
</feature>
<feature type="binding site" evidence="1">
    <location>
        <position position="36"/>
    </location>
    <ligand>
        <name>a divalent metal cation</name>
        <dbReference type="ChEBI" id="CHEBI:60240"/>
        <label>5</label>
        <note>in cluster A</note>
    </ligand>
</feature>
<feature type="binding site" evidence="1">
    <location>
        <position position="37"/>
    </location>
    <ligand>
        <name>a divalent metal cation</name>
        <dbReference type="ChEBI" id="CHEBI:60240"/>
        <label>5</label>
        <note>in cluster A</note>
    </ligand>
</feature>
<feature type="binding site" evidence="1">
    <location>
        <position position="37"/>
    </location>
    <ligand>
        <name>a divalent metal cation</name>
        <dbReference type="ChEBI" id="CHEBI:60240"/>
        <label>6</label>
        <note>in cluster A</note>
    </ligand>
</feature>
<feature type="binding site" evidence="1">
    <location>
        <position position="41"/>
    </location>
    <ligand>
        <name>a divalent metal cation</name>
        <dbReference type="ChEBI" id="CHEBI:60240"/>
        <label>6</label>
        <note>in cluster A</note>
    </ligand>
</feature>
<feature type="binding site" evidence="1">
    <location>
        <position position="44"/>
    </location>
    <ligand>
        <name>a divalent metal cation</name>
        <dbReference type="ChEBI" id="CHEBI:60240"/>
        <label>4</label>
        <note>in cluster A</note>
    </ligand>
</feature>
<feature type="binding site" evidence="1">
    <location>
        <position position="44"/>
    </location>
    <ligand>
        <name>a divalent metal cation</name>
        <dbReference type="ChEBI" id="CHEBI:60240"/>
        <label>6</label>
        <note>in cluster A</note>
    </ligand>
</feature>
<feature type="binding site" evidence="1">
    <location>
        <position position="48"/>
    </location>
    <ligand>
        <name>a divalent metal cation</name>
        <dbReference type="ChEBI" id="CHEBI:60240"/>
        <label>4</label>
        <note>in cluster A</note>
    </ligand>
</feature>
<feature type="binding site" evidence="1">
    <location>
        <position position="50"/>
    </location>
    <ligand>
        <name>a divalent metal cation</name>
        <dbReference type="ChEBI" id="CHEBI:60240"/>
        <label>5</label>
        <note>in cluster A</note>
    </ligand>
</feature>
<feature type="binding site" evidence="1">
    <location>
        <position position="50"/>
    </location>
    <ligand>
        <name>a divalent metal cation</name>
        <dbReference type="ChEBI" id="CHEBI:60240"/>
        <label>7</label>
        <note>in cluster A</note>
    </ligand>
</feature>
<feature type="binding site" evidence="1">
    <location>
        <position position="57"/>
    </location>
    <ligand>
        <name>a divalent metal cation</name>
        <dbReference type="ChEBI" id="CHEBI:60240"/>
        <label>7</label>
        <note>in cluster A</note>
    </ligand>
</feature>
<feature type="binding site" evidence="1">
    <location>
        <position position="59"/>
    </location>
    <ligand>
        <name>a divalent metal cation</name>
        <dbReference type="ChEBI" id="CHEBI:60240"/>
        <label>7</label>
        <note>in cluster A</note>
    </ligand>
</feature>
<feature type="binding site" evidence="1">
    <location>
        <position position="60"/>
    </location>
    <ligand>
        <name>a divalent metal cation</name>
        <dbReference type="ChEBI" id="CHEBI:60240"/>
        <label>6</label>
        <note>in cluster A</note>
    </ligand>
</feature>
<feature type="binding site" evidence="1">
    <location>
        <position position="60"/>
    </location>
    <ligand>
        <name>a divalent metal cation</name>
        <dbReference type="ChEBI" id="CHEBI:60240"/>
        <label>7</label>
        <note>in cluster A</note>
    </ligand>
</feature>
<feature type="modified residue" description="N-acetylmethionine" evidence="2">
    <location>
        <position position="1"/>
    </location>
</feature>
<feature type="modified residue" description="Phosphoserine" evidence="1">
    <location>
        <position position="58"/>
    </location>
</feature>
<proteinExistence type="evidence at protein level"/>
<name>MT1H_BOVIN</name>
<evidence type="ECO:0000250" key="1">
    <source>
        <dbReference type="UniProtKB" id="P02795"/>
    </source>
</evidence>
<evidence type="ECO:0000250" key="2">
    <source>
        <dbReference type="UniProtKB" id="P80294"/>
    </source>
</evidence>
<evidence type="ECO:0000305" key="3"/>
<keyword id="KW-0007">Acetylation</keyword>
<keyword id="KW-0903">Direct protein sequencing</keyword>
<keyword id="KW-0479">Metal-binding</keyword>
<keyword id="KW-0480">Metal-thiolate cluster</keyword>
<keyword id="KW-0597">Phosphoprotein</keyword>
<keyword id="KW-1185">Reference proteome</keyword>
<sequence length="61" mass="6086">MDPNCSCATGDSCACASTCKCKECKCTSCKKSCCSCCPVGCAKCAQGCICKGASDKCSCCA</sequence>
<comment type="function">
    <text>Metallothioneins have a high content of cysteine residues that bind various heavy metals; these proteins are transcriptionally regulated by both heavy metals and glucocorticoids. This isoform may play a role in regulating the transport, accumulation, and compartmentation of zinc in the hippocampus.</text>
</comment>
<comment type="domain">
    <text>Class I metallothioneins contain 2 metal-binding domains: four divalent ions are chelated within cluster A of the alpha domain and are coordinated via cysteinyl thiolate bridges to 11 cysteine ligands. Cluster B, the corresponding region within the beta domain, can ligate three divalent ions to 9 cysteines.</text>
</comment>
<comment type="similarity">
    <text evidence="3">Belongs to the metallothionein superfamily. Type 1 family.</text>
</comment>